<accession>A8WT19</accession>
<feature type="chain" id="PRO_0000367032" description="Pre-mRNA-splicing factor CWC22 homolog">
    <location>
        <begin position="1"/>
        <end position="935"/>
    </location>
</feature>
<feature type="domain" description="MIF4G" evidence="4">
    <location>
        <begin position="212"/>
        <end position="400"/>
    </location>
</feature>
<feature type="domain" description="MI" evidence="4">
    <location>
        <begin position="502"/>
        <end position="633"/>
    </location>
</feature>
<feature type="region of interest" description="Disordered" evidence="5">
    <location>
        <begin position="1"/>
        <end position="179"/>
    </location>
</feature>
<feature type="region of interest" description="Disordered" evidence="5">
    <location>
        <begin position="463"/>
        <end position="489"/>
    </location>
</feature>
<feature type="region of interest" description="Disordered" evidence="5">
    <location>
        <begin position="725"/>
        <end position="935"/>
    </location>
</feature>
<feature type="compositionally biased region" description="Basic and acidic residues" evidence="5">
    <location>
        <begin position="13"/>
        <end position="25"/>
    </location>
</feature>
<feature type="compositionally biased region" description="Basic and acidic residues" evidence="5">
    <location>
        <begin position="49"/>
        <end position="70"/>
    </location>
</feature>
<feature type="compositionally biased region" description="Basic residues" evidence="5">
    <location>
        <begin position="84"/>
        <end position="148"/>
    </location>
</feature>
<feature type="compositionally biased region" description="Basic and acidic residues" evidence="5">
    <location>
        <begin position="159"/>
        <end position="175"/>
    </location>
</feature>
<feature type="compositionally biased region" description="Acidic residues" evidence="5">
    <location>
        <begin position="465"/>
        <end position="483"/>
    </location>
</feature>
<feature type="compositionally biased region" description="Low complexity" evidence="5">
    <location>
        <begin position="729"/>
        <end position="763"/>
    </location>
</feature>
<feature type="compositionally biased region" description="Basic and acidic residues" evidence="5">
    <location>
        <begin position="780"/>
        <end position="891"/>
    </location>
</feature>
<feature type="compositionally biased region" description="Basic and acidic residues" evidence="5">
    <location>
        <begin position="897"/>
        <end position="935"/>
    </location>
</feature>
<dbReference type="EMBL" id="HE601438">
    <property type="protein sequence ID" value="CAP23630.2"/>
    <property type="molecule type" value="Genomic_DNA"/>
</dbReference>
<dbReference type="SMR" id="A8WT19"/>
<dbReference type="FunCoup" id="A8WT19">
    <property type="interactions" value="2891"/>
</dbReference>
<dbReference type="STRING" id="6238.A8WT19"/>
<dbReference type="EnsemblMetazoa" id="CBG02984a.1">
    <property type="protein sequence ID" value="CBG02984a.1"/>
    <property type="gene ID" value="WBGene00025938"/>
</dbReference>
<dbReference type="WormBase" id="CBG02984a">
    <property type="protein sequence ID" value="CBP27846"/>
    <property type="gene ID" value="WBGene00025938"/>
    <property type="gene designation" value="Cbr-let-858"/>
</dbReference>
<dbReference type="eggNOG" id="KOG2140">
    <property type="taxonomic scope" value="Eukaryota"/>
</dbReference>
<dbReference type="HOGENOM" id="CLU_006308_1_2_1"/>
<dbReference type="InParanoid" id="A8WT19"/>
<dbReference type="OMA" id="ILTEDMR"/>
<dbReference type="Proteomes" id="UP000008549">
    <property type="component" value="Unassembled WGS sequence"/>
</dbReference>
<dbReference type="GO" id="GO:0071013">
    <property type="term" value="C:catalytic step 2 spliceosome"/>
    <property type="evidence" value="ECO:0000318"/>
    <property type="project" value="GO_Central"/>
</dbReference>
<dbReference type="GO" id="GO:0016607">
    <property type="term" value="C:nuclear speck"/>
    <property type="evidence" value="ECO:0007669"/>
    <property type="project" value="UniProtKB-SubCell"/>
</dbReference>
<dbReference type="GO" id="GO:0003723">
    <property type="term" value="F:RNA binding"/>
    <property type="evidence" value="ECO:0000318"/>
    <property type="project" value="GO_Central"/>
</dbReference>
<dbReference type="GO" id="GO:0000398">
    <property type="term" value="P:mRNA splicing, via spliceosome"/>
    <property type="evidence" value="ECO:0000318"/>
    <property type="project" value="GO_Central"/>
</dbReference>
<dbReference type="FunFam" id="1.25.40.180:FF:000004">
    <property type="entry name" value="pre-mRNA-splicing factor CWC22 homolog"/>
    <property type="match status" value="1"/>
</dbReference>
<dbReference type="Gene3D" id="1.25.40.180">
    <property type="match status" value="1"/>
</dbReference>
<dbReference type="InterPro" id="IPR016024">
    <property type="entry name" value="ARM-type_fold"/>
</dbReference>
<dbReference type="InterPro" id="IPR050781">
    <property type="entry name" value="CWC22_splicing_factor"/>
</dbReference>
<dbReference type="InterPro" id="IPR003891">
    <property type="entry name" value="Initiation_fac_eIF4g_MI"/>
</dbReference>
<dbReference type="InterPro" id="IPR003890">
    <property type="entry name" value="MIF4G-like_typ-3"/>
</dbReference>
<dbReference type="PANTHER" id="PTHR18034">
    <property type="entry name" value="CELL CYCLE CONTROL PROTEIN CWF22-RELATED"/>
    <property type="match status" value="1"/>
</dbReference>
<dbReference type="PANTHER" id="PTHR18034:SF3">
    <property type="entry name" value="PRE-MRNA-SPLICING FACTOR CWC22 HOMOLOG"/>
    <property type="match status" value="1"/>
</dbReference>
<dbReference type="Pfam" id="PF02847">
    <property type="entry name" value="MA3"/>
    <property type="match status" value="1"/>
</dbReference>
<dbReference type="Pfam" id="PF02854">
    <property type="entry name" value="MIF4G"/>
    <property type="match status" value="1"/>
</dbReference>
<dbReference type="SMART" id="SM00544">
    <property type="entry name" value="MA3"/>
    <property type="match status" value="1"/>
</dbReference>
<dbReference type="SMART" id="SM00543">
    <property type="entry name" value="MIF4G"/>
    <property type="match status" value="1"/>
</dbReference>
<dbReference type="SUPFAM" id="SSF48371">
    <property type="entry name" value="ARM repeat"/>
    <property type="match status" value="1"/>
</dbReference>
<dbReference type="PROSITE" id="PS51366">
    <property type="entry name" value="MI"/>
    <property type="match status" value="1"/>
</dbReference>
<name>CWC22_CAEBR</name>
<protein>
    <recommendedName>
        <fullName>Pre-mRNA-splicing factor CWC22 homolog</fullName>
    </recommendedName>
    <alternativeName>
        <fullName evidence="2 6">Lethal protein 858</fullName>
    </alternativeName>
    <alternativeName>
        <fullName evidence="2">Nucampholin</fullName>
    </alternativeName>
</protein>
<gene>
    <name evidence="6" type="primary">let-858</name>
    <name type="ORF">CBG02984</name>
</gene>
<comment type="function">
    <text evidence="1">Required for early embryogenesis and tissue differentiation. Required for pre-mRNA splicing and for exon-junction complex (EJC) assembly. Hinders EIF4A3 from non-specifically binding RNA and escorts it to the splicing machinery to promote EJC assembly on mature mRNAs. Through its role in EJC assembly, required for nonsense-mediated mRNA decay (By similarity).</text>
</comment>
<comment type="subcellular location">
    <subcellularLocation>
        <location evidence="2">Nucleus</location>
    </subcellularLocation>
    <subcellularLocation>
        <location evidence="1">Nucleus speckle</location>
    </subcellularLocation>
</comment>
<comment type="similarity">
    <text evidence="3">Belongs to the CWC22 family.</text>
</comment>
<keyword id="KW-0507">mRNA processing</keyword>
<keyword id="KW-0508">mRNA splicing</keyword>
<keyword id="KW-0539">Nucleus</keyword>
<keyword id="KW-1185">Reference proteome</keyword>
<proteinExistence type="inferred from homology"/>
<organism>
    <name type="scientific">Caenorhabditis briggsae</name>
    <dbReference type="NCBI Taxonomy" id="6238"/>
    <lineage>
        <taxon>Eukaryota</taxon>
        <taxon>Metazoa</taxon>
        <taxon>Ecdysozoa</taxon>
        <taxon>Nematoda</taxon>
        <taxon>Chromadorea</taxon>
        <taxon>Rhabditida</taxon>
        <taxon>Rhabditina</taxon>
        <taxon>Rhabditomorpha</taxon>
        <taxon>Rhabditoidea</taxon>
        <taxon>Rhabditidae</taxon>
        <taxon>Peloderinae</taxon>
        <taxon>Caenorhabditis</taxon>
    </lineage>
</organism>
<sequence>MSRSPSPDSPPAVRDDEEKDAREQSDSPTSNTDDPKSPSESPKSNRSQESSRKDSRESGKRRDSHEDEKMPLTPPNRSSEASPQHRRHRESRSPSRSRSRSHRSHSRSQYRRSRSRSRDRRSRSRSRDRRSHSRSRDRRSPARRRSPVRAKSPAQAVKPTEEPEKKKNDPKDLLRTRTGGAYIPPAKLRLMQQQITDKSSEQYQRMNWERMKKKIHGLVNRVNAKNLVQIVRELLQENVIRSKGLLCRDIIQAQAFSPGFSNVYAALAAVINSKFPHIGELLLRRLIVQFKRSFRRNDRGVTVNVIKFIAHLINQQVAHEVLALEIMILMLEEPTDDSVEVAIAFLKECGAKLMEIAPAALNSVYDRLRAILMETERSENALDRRIQYMIETAMQIRKDKFAAYPAVVEDLDLIEEEDQIIHTLNLEDAVDPENGLNVFKLDPEFEKNENVYEEIRKEIIGDADISSDEEEEVEDDDEESEAEEAPRKTTEIIDNTDQNLTAFRREVYLTLQSSLDYQEAAHKLLKMKIPDNLQVNVILKFIQKKSEFQNELCAMLVDCCAQQRTYERFYGMLIERFCRLRLEYQQCFEKLCQDTYATVHRIDITKLRNLARLVAHLLSTDAIEWKILADVKMTEEDTTSAGRIYIKFIFMELVEAMGMVKLHTRVTDPTLAHCFVGMFPRTDPQDARFAINFFTMIGLGGLTLELREWLNRGLKKKKGIIDELKAAQSSSDSSSDSSDSSDSSDSSGSSDSSDDSSSSSSSDSSKEPPKKKKKSGTVLKKKETDTNDHKEARGDSRAERRNDEEKLKRRSDEGRRDRSAENREPRRGRDRRDSGDDRHDRGRRDRSKEKEDRGDKRSQRHDSREEDRRERKDRDRRDRSEERDNRRDRKERSRSRDRRDHRDRSRSRERNEKRRHDDDRRREEKVGSDDRRRRH</sequence>
<reference evidence="6" key="1">
    <citation type="journal article" date="2003" name="PLoS Biol.">
        <title>The genome sequence of Caenorhabditis briggsae: a platform for comparative genomics.</title>
        <authorList>
            <person name="Stein L.D."/>
            <person name="Bao Z."/>
            <person name="Blasiar D."/>
            <person name="Blumenthal T."/>
            <person name="Brent M.R."/>
            <person name="Chen N."/>
            <person name="Chinwalla A."/>
            <person name="Clarke L."/>
            <person name="Clee C."/>
            <person name="Coghlan A."/>
            <person name="Coulson A."/>
            <person name="D'Eustachio P."/>
            <person name="Fitch D.H.A."/>
            <person name="Fulton L.A."/>
            <person name="Fulton R.E."/>
            <person name="Griffiths-Jones S."/>
            <person name="Harris T.W."/>
            <person name="Hillier L.W."/>
            <person name="Kamath R."/>
            <person name="Kuwabara P.E."/>
            <person name="Mardis E.R."/>
            <person name="Marra M.A."/>
            <person name="Miner T.L."/>
            <person name="Minx P."/>
            <person name="Mullikin J.C."/>
            <person name="Plumb R.W."/>
            <person name="Rogers J."/>
            <person name="Schein J.E."/>
            <person name="Sohrmann M."/>
            <person name="Spieth J."/>
            <person name="Stajich J.E."/>
            <person name="Wei C."/>
            <person name="Willey D."/>
            <person name="Wilson R.K."/>
            <person name="Durbin R.M."/>
            <person name="Waterston R.H."/>
        </authorList>
    </citation>
    <scope>NUCLEOTIDE SEQUENCE [LARGE SCALE GENOMIC DNA]</scope>
    <source>
        <strain evidence="6">AF16</strain>
    </source>
</reference>
<evidence type="ECO:0000250" key="1"/>
<evidence type="ECO:0000250" key="2">
    <source>
        <dbReference type="UniProtKB" id="Q17336"/>
    </source>
</evidence>
<evidence type="ECO:0000255" key="3"/>
<evidence type="ECO:0000255" key="4">
    <source>
        <dbReference type="PROSITE-ProRule" id="PRU00698"/>
    </source>
</evidence>
<evidence type="ECO:0000256" key="5">
    <source>
        <dbReference type="SAM" id="MobiDB-lite"/>
    </source>
</evidence>
<evidence type="ECO:0000312" key="6">
    <source>
        <dbReference type="EMBL" id="CAP23630.2"/>
    </source>
</evidence>